<organism>
    <name type="scientific">Feline calicivirus (strain F9)</name>
    <name type="common">FCV</name>
    <dbReference type="NCBI Taxonomy" id="11981"/>
    <lineage>
        <taxon>Viruses</taxon>
        <taxon>Riboviria</taxon>
        <taxon>Orthornavirae</taxon>
        <taxon>Pisuviricota</taxon>
        <taxon>Pisoniviricetes</taxon>
        <taxon>Picornavirales</taxon>
        <taxon>Caliciviridae</taxon>
        <taxon>Vesivirus</taxon>
        <taxon>Feline calicivirus</taxon>
    </lineage>
</organism>
<reference key="1">
    <citation type="journal article" date="1992" name="Virology">
        <title>The complete nucleotide sequence of a feline calicivirus.</title>
        <authorList>
            <person name="Carter M.J."/>
            <person name="Milton I.D."/>
            <person name="Meanger J."/>
            <person name="Bennett M."/>
            <person name="Gaskell R.M."/>
            <person name="Turner P.C."/>
        </authorList>
    </citation>
    <scope>NUCLEOTIDE SEQUENCE [GENOMIC RNA]</scope>
</reference>
<reference key="2">
    <citation type="journal article" date="1992" name="Biochem. Soc. Trans.">
        <title>Cloning and sequence determination of the feline calicivirus strain F9.</title>
        <authorList>
            <person name="Meanger J."/>
            <person name="Carter M.J."/>
            <person name="Gaskell R.M."/>
            <person name="Turner P.C."/>
        </authorList>
    </citation>
    <scope>NUCLEOTIDE SEQUENCE [GENOMIC RNA]</scope>
</reference>
<reference key="3">
    <citation type="journal article" date="1992" name="Arch. Virol.">
        <title>Identification and sequence determination of the capsid protein gene of feline calicivirus.</title>
        <authorList>
            <person name="Carter M.J."/>
            <person name="Milton I.D."/>
            <person name="Turner P.C."/>
            <person name="Meanger J."/>
            <person name="Bennett M."/>
            <person name="Gaskell R.M."/>
        </authorList>
    </citation>
    <scope>NUCLEOTIDE SEQUENCE [GENOMIC RNA]</scope>
    <scope>PROTEIN SEQUENCE OF 125-131</scope>
    <scope>PROTEOLYTIC PROCESSING (CAPSID PROTEIN)</scope>
</reference>
<reference key="4">
    <citation type="journal article" date="2003" name="J. Gen. Virol.">
        <title>Caspase-mediated cleavage of the feline calicivirus capsid protein.</title>
        <authorList>
            <person name="Al-Molawi N."/>
            <person name="Beardmore V.A."/>
            <person name="Carter M.J."/>
            <person name="Kass G.E."/>
            <person name="Roberts L.O."/>
        </authorList>
    </citation>
    <scope>PROTEOLYTIC CLEAVAGE BY HOST CASPASE (CAPSID PROTEIN)</scope>
</reference>
<reference key="5">
    <citation type="journal article" date="2006" name="J. Virol.">
        <title>Entry of feline calicivirus is dependent on clathrin-mediated endocytosis and acidification in endosomes.</title>
        <authorList>
            <person name="Stuart A.D."/>
            <person name="Brown T.D."/>
        </authorList>
    </citation>
    <scope>FUNCTION IN VIRAL ENTRY (MATURE CAPSID PROTEIN)</scope>
</reference>
<reference key="6">
    <citation type="journal article" date="2007" name="J. Virol.">
        <title>Identification of regions and residues in feline junctional adhesion molecule required for feline calicivirus binding and infection.</title>
        <authorList>
            <person name="Ossiboff R.J."/>
            <person name="Parker J.S.L."/>
        </authorList>
    </citation>
    <scope>INTERACTION WITH HOST F11R/FJAM-A (MATURE CAPSID PROTEIN)</scope>
    <scope>FUNCTION (MATURE CAPSID PROTEIN)</scope>
</reference>
<reference key="7">
    <citation type="journal article" date="2007" name="J. Gen. Virol.">
        <title>Alpha2,6-linked sialic acid acts as a receptor for Feline calicivirus.</title>
        <authorList>
            <person name="Stuart A.D."/>
            <person name="Brown T.D."/>
        </authorList>
    </citation>
    <scope>INTERACTION WITH ALPHA2,6-LINKED SIALIC ACID (MATURE CAPSID PROTEIN)</scope>
    <scope>FUNCTION (MATURE CAPSID PROTEIN)</scope>
</reference>
<reference key="8">
    <citation type="journal article" date="2022" name="Viruses">
        <title>The Feline Calicivirus Leader of the Capsid Protein Has the Functional Characteristics of a Viroporin.</title>
        <authorList>
            <person name="Penaflor-Tellez Y."/>
            <person name="Chavez-Munguia B."/>
            <person name="Lagunes-Guillen A."/>
            <person name="Salazar-Villatoro L."/>
            <person name="Gutierrez-Escolano A.L."/>
        </authorList>
    </citation>
    <scope>FUNCTION (CAPSID LEADER PROTEIN)</scope>
    <scope>SUBUNIT (CAPSID LEADER PROTEIN)</scope>
</reference>
<reference evidence="11" key="9">
    <citation type="journal article" date="2019" name="Nature">
        <title>Calicivirus VP2 forms a portal-like assembly following receptor engagement.</title>
        <authorList>
            <person name="Conley M.J."/>
            <person name="McElwee M."/>
            <person name="Azmi L."/>
            <person name="Gabrielsen M."/>
            <person name="Byron O."/>
            <person name="Goodfellow I.G."/>
            <person name="Bhella D."/>
        </authorList>
    </citation>
    <scope>STRUCTURE BY ELECTRON MICROSCOPY (3.75 ANGSTROMS) OF 1-671 IN COMPLEX WITH F11R/FJAM-A</scope>
    <scope>FUNCTION (MATURE CAPSID PROTEIN)</scope>
    <scope>SUBCELLULAR LOCATION (MATURE CAPSID PROTEIN)</scope>
    <scope>INTERACTION WITH HOST F11R/FJAM-A (MATURE CAPSID PROTEIN)</scope>
    <scope>INTERACTION WITH THE MINOR CAPSID PROTEIN VP2</scope>
</reference>
<sequence>MCSTCANVLKYYDWDPHFKLVINPNNFLSVGFCSNPLMCCYPELLPEFGTVWDCDRSPLEIYLESILGDDEWASTFDAVDPVVPPMHWGAAGKIFQPHPGVLMHHLIGKVAAGWDPDLPLIRLEADDGSITAPEQGTMVGGVIAEPSAQMSTAADMATGKSVDSEWEAFFSFHTSVNWSTSETQGKILFKQSLGPLLNPYLEHLAKLYVAWSGSIEVRFSISGSGVFGGKLAAIVVPPGVDPVQSTSMLQYPHVLFDARQVEPVIFCLPDLRSTLYHLMSDTDTTSLVIMVYNDLINPYANDANSSGCIVTVETKPGPDFKFHLLKPPGSMLTHGSIPSDLIPKTSSLWIGNRYWSDITDFVIRPFVFQANRHFDFNQETAGWSTPRFRPISVTITEQNGAKLGIGVATDYIVPGIPDGWPDTTIPGELIPAGDYAITNGTGNDITTATGYDTADIIKNNTNFRGMYICGSLQRAWGDKKISNTAFITTATLDGDNNNKINPCNTIDQSKIVVFQDNHVGKKAQTSDDTLALLGYTGIGEQAIGSDRDRVVRISTLPETGARGGNHPIFYKNSIKLGYVIRSIDVFNSQILHTSRQLSLNHYLLPPDSFAVYRIIDSNGSWFDIGIDSDGFSFVGVSGFGKLEFPLSASYMGIQLAKIRLASNIRSPMTKL</sequence>
<organismHost>
    <name type="scientific">Felidae</name>
    <name type="common">cat family</name>
    <dbReference type="NCBI Taxonomy" id="9681"/>
</organismHost>
<proteinExistence type="evidence at protein level"/>
<comment type="function">
    <molecule>Mature capsid protein</molecule>
    <text evidence="4 5 7 8 10">Self assembles to form an icosahedral capsid with a T=3 symmetry, about 38 nm in diameter, and consisting of 180 capsid proteins (PubMed:30626974). A smaller form of capsid with a diameter of 23 nm might be capsid proteins assembled as icosahedron with T=1 symmetry. The capsid encapsulates the genomic RNA and is decorated with VP2 proteins (PubMed:1633955). Attaches virion to target cells by binding to feline junctional adhesion molecule A (F11R) and/or to alpha-2,6-linked sialic acid (PubMed:17170450, PubMed:17913818, PubMed:30626974). Once attached, the virion is endocytosed. Acidification of the endosome induces conformational change of capsid protein thereby injecting virus genomic RNA into host cytoplasm (Probable).</text>
</comment>
<comment type="function">
    <molecule>Capsid leader protein</molecule>
    <text evidence="9">May function as a viroporin.</text>
</comment>
<comment type="subunit">
    <molecule>Mature capsid protein</molecule>
    <text evidence="2 5 7 8">Homomultimer (By similarity). Interacts with the minor capsid protein VP2 (PubMed:30626974). May bind to VP3 and Vpg proteins. Binds to alpha-2,6-linked sialic acid at surface of target cells (PubMed:17170450). Interacts with host F11R/JAM-1/JAM-A; this interaction allows viral binding and entry into the host cell (PubMed:17913818).</text>
</comment>
<comment type="subunit">
    <molecule>Capsid leader protein</molecule>
    <text evidence="9">Homooligomer; probably disulfide-linked.</text>
</comment>
<comment type="subcellular location">
    <molecule>Mature capsid protein</molecule>
    <subcellularLocation>
        <location evidence="8">Virion</location>
    </subcellularLocation>
    <subcellularLocation>
        <location>Host cytoplasm</location>
    </subcellularLocation>
</comment>
<comment type="PTM">
    <molecule>Capsid protein VP1</molecule>
    <text evidence="3 6">Cleaved by the viral protease to produce mature capsid protein (PubMed:1731695). Cleaved by host caspase-2 and caspase-6 to generate protein p40, this might be linked to the cytopathic effect of the capsid leader protein (PubMed:12692289).</text>
</comment>
<comment type="similarity">
    <text evidence="10">Belongs to the caliciviridae capsid protein family.</text>
</comment>
<feature type="chain" id="PRO_0000460232" description="Capsid protein VP1">
    <location>
        <begin position="1"/>
        <end position="671"/>
    </location>
</feature>
<feature type="chain" id="PRO_0000460233" description="Capsid leader protein">
    <location>
        <begin position="1"/>
        <end position="124"/>
    </location>
</feature>
<feature type="chain" id="PRO_0000036879" description="Mature capsid protein">
    <location>
        <begin position="125"/>
        <end position="671"/>
    </location>
</feature>
<feature type="chain" id="PRO_0000341981" description="Protein 40k">
    <location>
        <begin position="465" status="uncertain"/>
        <end position="671"/>
    </location>
</feature>
<feature type="site" description="Cleavage; by viral protease" evidence="6">
    <location>
        <begin position="124"/>
        <end position="125"/>
    </location>
</feature>
<feature type="site" description="Interaction with host receptor F11R/JAM-1" evidence="8">
    <location>
        <position position="479"/>
    </location>
</feature>
<feature type="site" description="Interaction with host receptor F11R/JAM-1" evidence="8">
    <location>
        <position position="480"/>
    </location>
</feature>
<dbReference type="EMBL" id="M86379">
    <property type="protein sequence ID" value="AAA79327.1"/>
    <property type="molecule type" value="Genomic_RNA"/>
</dbReference>
<dbReference type="EMBL" id="Z11536">
    <property type="protein sequence ID" value="CAA77636.1"/>
    <property type="molecule type" value="Genomic_RNA"/>
</dbReference>
<dbReference type="PIR" id="B43382">
    <property type="entry name" value="VCWWF9"/>
</dbReference>
<dbReference type="PDB" id="6GSI">
    <property type="method" value="EM"/>
    <property type="resolution" value="3.75 A"/>
    <property type="chains" value="A/B/C/D=1-671"/>
</dbReference>
<dbReference type="PDBsum" id="6GSI"/>
<dbReference type="EMDB" id="EMD-0056"/>
<dbReference type="SMR" id="P27406"/>
<dbReference type="Proteomes" id="UP000008762">
    <property type="component" value="Segment"/>
</dbReference>
<dbReference type="GO" id="GO:0030430">
    <property type="term" value="C:host cell cytoplasm"/>
    <property type="evidence" value="ECO:0007669"/>
    <property type="project" value="UniProtKB-SubCell"/>
</dbReference>
<dbReference type="GO" id="GO:0039617">
    <property type="term" value="C:T=3 icosahedral viral capsid"/>
    <property type="evidence" value="ECO:0007669"/>
    <property type="project" value="UniProtKB-KW"/>
</dbReference>
<dbReference type="CDD" id="cd00205">
    <property type="entry name" value="rhv_like"/>
    <property type="match status" value="1"/>
</dbReference>
<dbReference type="Gene3D" id="2.60.120.20">
    <property type="match status" value="1"/>
</dbReference>
<dbReference type="InterPro" id="IPR004005">
    <property type="entry name" value="Calicivirus_coat"/>
</dbReference>
<dbReference type="InterPro" id="IPR033703">
    <property type="entry name" value="Rhv-like"/>
</dbReference>
<dbReference type="InterPro" id="IPR029053">
    <property type="entry name" value="Viral_coat"/>
</dbReference>
<dbReference type="Pfam" id="PF00915">
    <property type="entry name" value="Calici_coat"/>
    <property type="match status" value="1"/>
</dbReference>
<dbReference type="SUPFAM" id="SSF88633">
    <property type="entry name" value="Positive stranded ssRNA viruses"/>
    <property type="match status" value="1"/>
</dbReference>
<gene>
    <name type="primary">CPP76</name>
    <name type="ORF">ORF2</name>
</gene>
<name>CAPSD_FCVF9</name>
<keyword id="KW-0002">3D-structure</keyword>
<keyword id="KW-0167">Capsid protein</keyword>
<keyword id="KW-0903">Direct protein sequencing</keyword>
<keyword id="KW-1015">Disulfide bond</keyword>
<keyword id="KW-1035">Host cytoplasm</keyword>
<keyword id="KW-1142">T=3 icosahedral capsid protein</keyword>
<keyword id="KW-0946">Virion</keyword>
<accession>P27406</accession>
<evidence type="ECO:0000250" key="1">
    <source>
        <dbReference type="UniProtKB" id="Q66915"/>
    </source>
</evidence>
<evidence type="ECO:0000250" key="2">
    <source>
        <dbReference type="UniProtKB" id="Q83884"/>
    </source>
</evidence>
<evidence type="ECO:0000269" key="3">
    <source>
    </source>
</evidence>
<evidence type="ECO:0000269" key="4">
    <source>
    </source>
</evidence>
<evidence type="ECO:0000269" key="5">
    <source>
    </source>
</evidence>
<evidence type="ECO:0000269" key="6">
    <source>
    </source>
</evidence>
<evidence type="ECO:0000269" key="7">
    <source>
    </source>
</evidence>
<evidence type="ECO:0000269" key="8">
    <source>
    </source>
</evidence>
<evidence type="ECO:0000269" key="9">
    <source>
    </source>
</evidence>
<evidence type="ECO:0000305" key="10"/>
<evidence type="ECO:0007744" key="11">
    <source>
        <dbReference type="PDB" id="6GSI"/>
    </source>
</evidence>
<protein>
    <recommendedName>
        <fullName>Capsid protein VP1</fullName>
        <shortName>CP</shortName>
    </recommendedName>
    <alternativeName>
        <fullName>Coat protein</fullName>
    </alternativeName>
    <alternativeName>
        <fullName evidence="1">Protein 73 kDa</fullName>
    </alternativeName>
    <component>
        <recommendedName>
            <fullName evidence="1">Capsid leader protein</fullName>
            <shortName evidence="1">LC</shortName>
        </recommendedName>
        <alternativeName>
            <fullName evidence="1">Protein 14 kDa</fullName>
        </alternativeName>
    </component>
    <component>
        <recommendedName>
            <fullName>Mature capsid protein</fullName>
        </recommendedName>
        <alternativeName>
            <fullName evidence="1">Protein 59 kDa</fullName>
        </alternativeName>
    </component>
    <component>
        <recommendedName>
            <fullName>Protein 40k</fullName>
            <shortName>p40</shortName>
        </recommendedName>
    </component>
</protein>